<reference key="1">
    <citation type="submission" date="2003-09" db="EMBL/GenBank/DDBJ databases">
        <title>Characterization of genes expressed during infection of wheat roots by the 'take-all' fungus Gaeumannomyces graminis.</title>
        <authorList>
            <person name="Guilleroux M.S."/>
            <person name="Osbourn A.E."/>
        </authorList>
    </citation>
    <scope>NUCLEOTIDE SEQUENCE [MRNA]</scope>
</reference>
<comment type="function">
    <text>Actins are highly conserved proteins that are involved in various types of cell motility and are ubiquitously expressed in all eukaryotic cells.</text>
</comment>
<comment type="catalytic activity">
    <reaction evidence="1">
        <text>ATP + H2O = ADP + phosphate + H(+)</text>
        <dbReference type="Rhea" id="RHEA:13065"/>
        <dbReference type="ChEBI" id="CHEBI:15377"/>
        <dbReference type="ChEBI" id="CHEBI:15378"/>
        <dbReference type="ChEBI" id="CHEBI:30616"/>
        <dbReference type="ChEBI" id="CHEBI:43474"/>
        <dbReference type="ChEBI" id="CHEBI:456216"/>
    </reaction>
</comment>
<comment type="subcellular location">
    <subcellularLocation>
        <location>Cytoplasm</location>
        <location>Cytoskeleton</location>
    </subcellularLocation>
</comment>
<comment type="similarity">
    <text evidence="2">Belongs to the actin family.</text>
</comment>
<name>ACT_GAEAV</name>
<gene>
    <name type="primary">ACT</name>
</gene>
<accession>Q6TCF2</accession>
<evidence type="ECO:0000250" key="1">
    <source>
        <dbReference type="UniProtKB" id="P60010"/>
    </source>
</evidence>
<evidence type="ECO:0000305" key="2"/>
<feature type="chain" id="PRO_0000088943" description="Actin">
    <location>
        <begin position="1"/>
        <end position="375"/>
    </location>
</feature>
<organism>
    <name type="scientific">Gaeumannomyces avenae</name>
    <name type="common">Oat take-all root rot fungus</name>
    <name type="synonym">Gaeumannomyces graminis var. avenae</name>
    <dbReference type="NCBI Taxonomy" id="36778"/>
    <lineage>
        <taxon>Eukaryota</taxon>
        <taxon>Fungi</taxon>
        <taxon>Dikarya</taxon>
        <taxon>Ascomycota</taxon>
        <taxon>Pezizomycotina</taxon>
        <taxon>Sordariomycetes</taxon>
        <taxon>Sordariomycetidae</taxon>
        <taxon>Magnaporthales</taxon>
        <taxon>Magnaporthaceae</taxon>
        <taxon>Gaeumannomyces</taxon>
    </lineage>
</organism>
<sequence>MEEEVAALVIDNGSGMCKAGFAGDDAPRAVFPSIVGRPRHHGIMIGMGQKDSYVGDEAQSKRGILTLRYPIEHGVVTNWDDMEKIWHHTFYNELRVAPEEHPVLLTEAPINPKSNREKMTQIVFETFNAPAFYVSIQAVLSLYASGRTTGIVLDSGDGVTHVVPIYEGFALPHAIARVDMAGRDLTDYLMKILAERGYTFSTTAEREIVRDIKEKLCYVALDFEQEIQTAAQSSSLEKSYELPDGQVITIGNERFRAPEALFQPSVLGLESGGIHVTTFNSIMKCDVDVRKDLYGNIVMSGGTTMYPGLSDRMQKEITALAPSSMKVKIIAPPERKYSVWIGGSILASLSTFQQMWISKQEYDESGPSIVHRKCF</sequence>
<dbReference type="EC" id="3.6.4.-" evidence="1"/>
<dbReference type="EMBL" id="AY424309">
    <property type="protein sequence ID" value="AAR01976.1"/>
    <property type="molecule type" value="mRNA"/>
</dbReference>
<dbReference type="SMR" id="Q6TCF2"/>
<dbReference type="GO" id="GO:0005737">
    <property type="term" value="C:cytoplasm"/>
    <property type="evidence" value="ECO:0007669"/>
    <property type="project" value="UniProtKB-KW"/>
</dbReference>
<dbReference type="GO" id="GO:0005856">
    <property type="term" value="C:cytoskeleton"/>
    <property type="evidence" value="ECO:0007669"/>
    <property type="project" value="UniProtKB-SubCell"/>
</dbReference>
<dbReference type="GO" id="GO:0005524">
    <property type="term" value="F:ATP binding"/>
    <property type="evidence" value="ECO:0007669"/>
    <property type="project" value="UniProtKB-KW"/>
</dbReference>
<dbReference type="GO" id="GO:0016787">
    <property type="term" value="F:hydrolase activity"/>
    <property type="evidence" value="ECO:0007669"/>
    <property type="project" value="UniProtKB-KW"/>
</dbReference>
<dbReference type="CDD" id="cd10224">
    <property type="entry name" value="ASKHA_NBD_actin"/>
    <property type="match status" value="1"/>
</dbReference>
<dbReference type="FunFam" id="2.30.36.70:FF:000001">
    <property type="entry name" value="Actin, alpha skeletal muscle"/>
    <property type="match status" value="1"/>
</dbReference>
<dbReference type="FunFam" id="3.30.420.40:FF:000291">
    <property type="entry name" value="Actin, alpha skeletal muscle"/>
    <property type="match status" value="1"/>
</dbReference>
<dbReference type="FunFam" id="3.90.640.10:FF:000001">
    <property type="entry name" value="Actin, muscle"/>
    <property type="match status" value="1"/>
</dbReference>
<dbReference type="FunFam" id="3.30.420.40:FF:000404">
    <property type="entry name" value="Major actin"/>
    <property type="match status" value="1"/>
</dbReference>
<dbReference type="FunFam" id="3.30.420.40:FF:000058">
    <property type="entry name" value="Putative actin-related protein 5"/>
    <property type="match status" value="1"/>
</dbReference>
<dbReference type="Gene3D" id="3.30.420.40">
    <property type="match status" value="2"/>
</dbReference>
<dbReference type="Gene3D" id="3.90.640.10">
    <property type="entry name" value="Actin, Chain A, domain 4"/>
    <property type="match status" value="1"/>
</dbReference>
<dbReference type="InterPro" id="IPR004000">
    <property type="entry name" value="Actin"/>
</dbReference>
<dbReference type="InterPro" id="IPR020902">
    <property type="entry name" value="Actin/actin-like_CS"/>
</dbReference>
<dbReference type="InterPro" id="IPR004001">
    <property type="entry name" value="Actin_CS"/>
</dbReference>
<dbReference type="InterPro" id="IPR043129">
    <property type="entry name" value="ATPase_NBD"/>
</dbReference>
<dbReference type="PANTHER" id="PTHR11937">
    <property type="entry name" value="ACTIN"/>
    <property type="match status" value="1"/>
</dbReference>
<dbReference type="Pfam" id="PF00022">
    <property type="entry name" value="Actin"/>
    <property type="match status" value="1"/>
</dbReference>
<dbReference type="PRINTS" id="PR00190">
    <property type="entry name" value="ACTIN"/>
</dbReference>
<dbReference type="SMART" id="SM00268">
    <property type="entry name" value="ACTIN"/>
    <property type="match status" value="1"/>
</dbReference>
<dbReference type="SUPFAM" id="SSF53067">
    <property type="entry name" value="Actin-like ATPase domain"/>
    <property type="match status" value="2"/>
</dbReference>
<dbReference type="PROSITE" id="PS00406">
    <property type="entry name" value="ACTINS_1"/>
    <property type="match status" value="1"/>
</dbReference>
<dbReference type="PROSITE" id="PS00432">
    <property type="entry name" value="ACTINS_2"/>
    <property type="match status" value="1"/>
</dbReference>
<dbReference type="PROSITE" id="PS01132">
    <property type="entry name" value="ACTINS_ACT_LIKE"/>
    <property type="match status" value="1"/>
</dbReference>
<protein>
    <recommendedName>
        <fullName>Actin</fullName>
        <ecNumber evidence="1">3.6.4.-</ecNumber>
    </recommendedName>
</protein>
<keyword id="KW-0067">ATP-binding</keyword>
<keyword id="KW-0963">Cytoplasm</keyword>
<keyword id="KW-0206">Cytoskeleton</keyword>
<keyword id="KW-0378">Hydrolase</keyword>
<keyword id="KW-0547">Nucleotide-binding</keyword>
<proteinExistence type="evidence at transcript level"/>